<feature type="chain" id="PRO_0000405233" description="OVARIAN TUMOR DOMAIN-containing deubiquitinating enzyme 4">
    <location>
        <begin position="1"/>
        <end position="317"/>
    </location>
</feature>
<feature type="domain" description="OTU" evidence="3">
    <location>
        <begin position="168"/>
        <end position="306"/>
    </location>
</feature>
<feature type="active site" evidence="2">
    <location>
        <position position="176"/>
    </location>
</feature>
<feature type="active site" description="Nucleophile" evidence="1">
    <location>
        <position position="179"/>
    </location>
</feature>
<feature type="active site" evidence="1">
    <location>
        <position position="299"/>
    </location>
</feature>
<feature type="splice variant" id="VSP_040634" description="In isoform 2 and isoform 4." evidence="7">
    <location>
        <begin position="73"/>
        <end position="115"/>
    </location>
</feature>
<feature type="splice variant" id="VSP_060254" description="In isoform 5.">
    <original>SVL</original>
    <variation>CDC</variation>
    <location>
        <begin position="73"/>
        <end position="75"/>
    </location>
</feature>
<feature type="splice variant" id="VSP_060255" description="In isoform 5.">
    <location>
        <begin position="76"/>
        <end position="317"/>
    </location>
</feature>
<feature type="splice variant" id="VSP_060256" description="In isoform 4.">
    <original>VADEFIQRRQETEWFVEGDFDTYVRQ</original>
    <variation>TGNRMVRGRRFRHLRQTNSGSTRVGR</variation>
    <location>
        <begin position="213"/>
        <end position="238"/>
    </location>
</feature>
<feature type="splice variant" id="VSP_060257" description="In isoform 3.">
    <original>ADEF</original>
    <variation>SIYG</variation>
    <location>
        <begin position="214"/>
        <end position="217"/>
    </location>
</feature>
<feature type="splice variant" id="VSP_060258" description="In isoform 3.">
    <location>
        <begin position="218"/>
        <end position="317"/>
    </location>
</feature>
<feature type="splice variant" id="VSP_060259" description="In isoform 4.">
    <location>
        <begin position="239"/>
        <end position="317"/>
    </location>
</feature>
<feature type="mutagenesis site" description="Abolished cleavage activities for 'Lys-48'- and 'Lys-63'-linked ubiquitin (UB) tetramers and of linear UB polymer and RUB-GST fusion." evidence="5">
    <original>C</original>
    <variation>S</variation>
    <location>
        <position position="179"/>
    </location>
</feature>
<feature type="sequence conflict" description="In Ref. 5; BX824976." evidence="8" ref="5">
    <original>V</original>
    <variation>I</variation>
    <location>
        <position position="123"/>
    </location>
</feature>
<feature type="sequence conflict" description="In Ref. 5; BX824976." evidence="8" ref="5">
    <original>L</original>
    <variation>F</variation>
    <location>
        <position position="180"/>
    </location>
</feature>
<feature type="sequence conflict" description="In Ref. 5; BX824976." evidence="8" ref="5">
    <original>CLRS</original>
    <variation>LLT</variation>
    <location>
        <begin position="189"/>
        <end position="192"/>
    </location>
</feature>
<feature type="sequence conflict" description="In Ref. 5; BX824976." evidence="8" ref="5">
    <original>R</original>
    <variation>K</variation>
    <location>
        <position position="203"/>
    </location>
</feature>
<name>OTU4_ARATH</name>
<gene>
    <name evidence="6" type="primary">OTU4</name>
    <name evidence="9" type="ordered locus">At3g57810</name>
    <name evidence="10" type="ORF">T10K17.20</name>
</gene>
<comment type="function">
    <text evidence="5">Hydrolase that can remove conjugated ubiquitin from proteins in vitro and may therefore play an important regulatory role at the level of protein turnover by preventing degradation (PubMed:24659992). Cysteine protease with a preference for 'Lys-63' over 'Lys-48'-linked over 'Met-1' ubiquitin (UB) tetramers (e.g. Ub3 and Ub4) as substrates (PubMed:24659992). Also cleaves RUB-GST fusion (PubMed:24659992).</text>
</comment>
<comment type="catalytic activity">
    <reaction evidence="5">
        <text>Thiol-dependent hydrolysis of ester, thioester, amide, peptide and isopeptide bonds formed by the C-terminal Gly of ubiquitin (a 76-residue protein attached to proteins as an intracellular targeting signal).</text>
        <dbReference type="EC" id="3.4.19.12"/>
    </reaction>
</comment>
<comment type="biophysicochemical properties">
    <phDependence>
        <text evidence="5">Optimum pH is 7.</text>
    </phDependence>
</comment>
<comment type="subcellular location">
    <subcellularLocation>
        <location evidence="8">Cytoplasm</location>
    </subcellularLocation>
    <text evidence="4">Prediction of a peroxisomal location.</text>
</comment>
<comment type="alternative products">
    <event type="alternative splicing"/>
    <isoform>
        <id>Q8LBZ4-1</id>
        <name>1</name>
        <name evidence="6">OTU4a</name>
        <sequence type="displayed"/>
    </isoform>
    <isoform>
        <id>Q8LBZ4-2</id>
        <name>2</name>
        <name evidence="6">OTU4c</name>
        <sequence type="described" ref="VSP_040634"/>
    </isoform>
    <isoform>
        <id>Q8LBZ4-3</id>
        <name>3</name>
        <name evidence="6">OTU4b</name>
        <sequence type="described" ref="VSP_060257 VSP_060258"/>
    </isoform>
    <isoform>
        <id>Q8LBZ4-4</id>
        <name>4</name>
        <name evidence="6">OTU4d</name>
        <sequence type="described" ref="VSP_040634 VSP_060256 VSP_060259"/>
    </isoform>
    <isoform>
        <id>Q8LBZ4-5</id>
        <name>5</name>
        <name evidence="6">OTU4e</name>
        <sequence type="described" ref="VSP_060254 VSP_060255"/>
    </isoform>
</comment>
<comment type="similarity">
    <text evidence="8">Belongs to the peptidase C65 family.</text>
</comment>
<comment type="sequence caution" evidence="8">
    <conflict type="frameshift">
        <sequence resource="EMBL-CDS" id="BAD42988"/>
    </conflict>
</comment>
<comment type="sequence caution" evidence="8">
    <conflict type="frameshift">
        <sequence resource="EMBL-CDS" id="BAD44468"/>
    </conflict>
</comment>
<comment type="sequence caution" evidence="8">
    <conflict type="frameshift">
        <sequence resource="EMBL" id="BX824976"/>
    </conflict>
</comment>
<comment type="sequence caution" evidence="8">
    <conflict type="erroneous gene model prediction">
        <sequence resource="EMBL-CDS" id="CAB67609"/>
    </conflict>
</comment>
<keyword id="KW-0025">Alternative splicing</keyword>
<keyword id="KW-0963">Cytoplasm</keyword>
<keyword id="KW-0378">Hydrolase</keyword>
<keyword id="KW-1185">Reference proteome</keyword>
<keyword id="KW-0833">Ubl conjugation pathway</keyword>
<sequence length="317" mass="35774">MMICYSPITTCSRNAISIKRHLGSRLYGVVAHGSSKFSCYSLLSGLSRRHYTGFRVSVSNRPSSWHDKGLFGSVLINRPTVAPKEKLEVSFLSPEANMKCSKIESNMRNLYCYSRFAYTGVIVSLLVCYSSTSQSAYADSSRDKDANNVHHHSSDGKFHNGKRVYTDYSIIGIPGDGRCLFRSVAHGFCLRSGKLAPGEKMQRELADELRTRVADEFIQRRQETEWFVEGDFDTYVRQIRDPHVWGGEPELFMASHVLQMPITVYMKDDKAGGLISIAEYGQEYGKDDPIRVLYHGFGHYDALLLHESKASIPKSKL</sequence>
<organism>
    <name type="scientific">Arabidopsis thaliana</name>
    <name type="common">Mouse-ear cress</name>
    <dbReference type="NCBI Taxonomy" id="3702"/>
    <lineage>
        <taxon>Eukaryota</taxon>
        <taxon>Viridiplantae</taxon>
        <taxon>Streptophyta</taxon>
        <taxon>Embryophyta</taxon>
        <taxon>Tracheophyta</taxon>
        <taxon>Spermatophyta</taxon>
        <taxon>Magnoliopsida</taxon>
        <taxon>eudicotyledons</taxon>
        <taxon>Gunneridae</taxon>
        <taxon>Pentapetalae</taxon>
        <taxon>rosids</taxon>
        <taxon>malvids</taxon>
        <taxon>Brassicales</taxon>
        <taxon>Brassicaceae</taxon>
        <taxon>Camelineae</taxon>
        <taxon>Arabidopsis</taxon>
    </lineage>
</organism>
<dbReference type="EC" id="3.4.19.12" evidence="5"/>
<dbReference type="EMBL" id="JQ013445">
    <property type="protein sequence ID" value="AFS88948.1"/>
    <property type="molecule type" value="mRNA"/>
</dbReference>
<dbReference type="EMBL" id="JQ013446">
    <property type="protein sequence ID" value="AFS88949.1"/>
    <property type="molecule type" value="mRNA"/>
</dbReference>
<dbReference type="EMBL" id="JQ013447">
    <property type="protein sequence ID" value="AFS88950.1"/>
    <property type="molecule type" value="mRNA"/>
</dbReference>
<dbReference type="EMBL" id="JQ013448">
    <property type="protein sequence ID" value="AFS88951.1"/>
    <property type="molecule type" value="mRNA"/>
</dbReference>
<dbReference type="EMBL" id="AL132977">
    <property type="protein sequence ID" value="CAB67609.1"/>
    <property type="status" value="ALT_SEQ"/>
    <property type="molecule type" value="Genomic_DNA"/>
</dbReference>
<dbReference type="EMBL" id="CP002686">
    <property type="protein sequence ID" value="AEE79704.2"/>
    <property type="molecule type" value="Genomic_DNA"/>
</dbReference>
<dbReference type="EMBL" id="CP002686">
    <property type="protein sequence ID" value="AEE79705.1"/>
    <property type="molecule type" value="Genomic_DNA"/>
</dbReference>
<dbReference type="EMBL" id="CP002686">
    <property type="protein sequence ID" value="AEE79706.1"/>
    <property type="molecule type" value="Genomic_DNA"/>
</dbReference>
<dbReference type="EMBL" id="CP002686">
    <property type="protein sequence ID" value="ANM64743.1"/>
    <property type="molecule type" value="Genomic_DNA"/>
</dbReference>
<dbReference type="EMBL" id="AY086909">
    <property type="protein sequence ID" value="AAM63953.1"/>
    <property type="molecule type" value="mRNA"/>
</dbReference>
<dbReference type="EMBL" id="BX824976">
    <property type="status" value="NOT_ANNOTATED_CDS"/>
    <property type="molecule type" value="mRNA"/>
</dbReference>
<dbReference type="EMBL" id="AK175291">
    <property type="protein sequence ID" value="BAD43054.1"/>
    <property type="molecule type" value="mRNA"/>
</dbReference>
<dbReference type="EMBL" id="AK175225">
    <property type="protein sequence ID" value="BAD42988.1"/>
    <property type="status" value="ALT_FRAME"/>
    <property type="molecule type" value="mRNA"/>
</dbReference>
<dbReference type="EMBL" id="AK176705">
    <property type="protein sequence ID" value="BAD44468.1"/>
    <property type="status" value="ALT_FRAME"/>
    <property type="molecule type" value="mRNA"/>
</dbReference>
<dbReference type="EMBL" id="BT026114">
    <property type="protein sequence ID" value="ABG48470.1"/>
    <property type="molecule type" value="mRNA"/>
</dbReference>
<dbReference type="PIR" id="T46003">
    <property type="entry name" value="T46003"/>
</dbReference>
<dbReference type="RefSeq" id="NP_001078307.1">
    <molecule id="Q8LBZ4-1"/>
    <property type="nucleotide sequence ID" value="NM_001084838.2"/>
</dbReference>
<dbReference type="RefSeq" id="NP_001319786.1">
    <molecule id="Q8LBZ4-3"/>
    <property type="nucleotide sequence ID" value="NM_001339892.1"/>
</dbReference>
<dbReference type="RefSeq" id="NP_001326751.1">
    <molecule id="Q8LBZ4-1"/>
    <property type="nucleotide sequence ID" value="NM_001339893.1"/>
</dbReference>
<dbReference type="RefSeq" id="NP_850716.1">
    <molecule id="Q8LBZ4-1"/>
    <property type="nucleotide sequence ID" value="NM_180385.3"/>
</dbReference>
<dbReference type="SMR" id="Q8LBZ4"/>
<dbReference type="FunCoup" id="Q8LBZ4">
    <property type="interactions" value="756"/>
</dbReference>
<dbReference type="STRING" id="3702.Q8LBZ4"/>
<dbReference type="PaxDb" id="3702-AT3G57810.2"/>
<dbReference type="ProteomicsDB" id="218642"/>
<dbReference type="ProteomicsDB" id="248848">
    <molecule id="Q8LBZ4-1"/>
</dbReference>
<dbReference type="EnsemblPlants" id="AT3G57810.1">
    <molecule id="Q8LBZ4-3"/>
    <property type="protein sequence ID" value="AT3G57810.1"/>
    <property type="gene ID" value="AT3G57810"/>
</dbReference>
<dbReference type="EnsemblPlants" id="AT3G57810.2">
    <molecule id="Q8LBZ4-1"/>
    <property type="protein sequence ID" value="AT3G57810.2"/>
    <property type="gene ID" value="AT3G57810"/>
</dbReference>
<dbReference type="EnsemblPlants" id="AT3G57810.3">
    <molecule id="Q8LBZ4-1"/>
    <property type="protein sequence ID" value="AT3G57810.3"/>
    <property type="gene ID" value="AT3G57810"/>
</dbReference>
<dbReference type="EnsemblPlants" id="AT3G57810.4">
    <molecule id="Q8LBZ4-1"/>
    <property type="protein sequence ID" value="AT3G57810.4"/>
    <property type="gene ID" value="AT3G57810"/>
</dbReference>
<dbReference type="GeneID" id="824950"/>
<dbReference type="Gramene" id="AT3G57810.1">
    <molecule id="Q8LBZ4-3"/>
    <property type="protein sequence ID" value="AT3G57810.1"/>
    <property type="gene ID" value="AT3G57810"/>
</dbReference>
<dbReference type="Gramene" id="AT3G57810.2">
    <molecule id="Q8LBZ4-1"/>
    <property type="protein sequence ID" value="AT3G57810.2"/>
    <property type="gene ID" value="AT3G57810"/>
</dbReference>
<dbReference type="Gramene" id="AT3G57810.3">
    <molecule id="Q8LBZ4-1"/>
    <property type="protein sequence ID" value="AT3G57810.3"/>
    <property type="gene ID" value="AT3G57810"/>
</dbReference>
<dbReference type="Gramene" id="AT3G57810.4">
    <molecule id="Q8LBZ4-1"/>
    <property type="protein sequence ID" value="AT3G57810.4"/>
    <property type="gene ID" value="AT3G57810"/>
</dbReference>
<dbReference type="KEGG" id="ath:AT3G57810"/>
<dbReference type="Araport" id="AT3G57810"/>
<dbReference type="TAIR" id="AT3G57810"/>
<dbReference type="eggNOG" id="KOG2606">
    <property type="taxonomic scope" value="Eukaryota"/>
</dbReference>
<dbReference type="HOGENOM" id="CLU_046927_0_0_1"/>
<dbReference type="InParanoid" id="Q8LBZ4"/>
<dbReference type="OMA" id="VRQIREP"/>
<dbReference type="PhylomeDB" id="Q8LBZ4"/>
<dbReference type="PRO" id="PR:Q8LBZ4"/>
<dbReference type="Proteomes" id="UP000006548">
    <property type="component" value="Chromosome 3"/>
</dbReference>
<dbReference type="ExpressionAtlas" id="Q8LBZ4">
    <property type="expression patterns" value="baseline and differential"/>
</dbReference>
<dbReference type="GO" id="GO:0009507">
    <property type="term" value="C:chloroplast"/>
    <property type="evidence" value="ECO:0000314"/>
    <property type="project" value="TAIR"/>
</dbReference>
<dbReference type="GO" id="GO:0004843">
    <property type="term" value="F:cysteine-type deubiquitinase activity"/>
    <property type="evidence" value="ECO:0007669"/>
    <property type="project" value="UniProtKB-EC"/>
</dbReference>
<dbReference type="CDD" id="cd22760">
    <property type="entry name" value="OTU_plant_OTU4-like"/>
    <property type="match status" value="1"/>
</dbReference>
<dbReference type="FunFam" id="3.90.70.80:FF:000007">
    <property type="entry name" value="OTU domain-containing protein"/>
    <property type="match status" value="1"/>
</dbReference>
<dbReference type="Gene3D" id="3.90.70.80">
    <property type="match status" value="1"/>
</dbReference>
<dbReference type="InterPro" id="IPR047947">
    <property type="entry name" value="OTU4_OTU"/>
</dbReference>
<dbReference type="InterPro" id="IPR003323">
    <property type="entry name" value="OTU_dom"/>
</dbReference>
<dbReference type="InterPro" id="IPR038765">
    <property type="entry name" value="Papain-like_cys_pep_sf"/>
</dbReference>
<dbReference type="PANTHER" id="PTHR13312">
    <property type="entry name" value="HIV-INDUCED PROTEIN-7-LIKE PROTEASE"/>
    <property type="match status" value="1"/>
</dbReference>
<dbReference type="PANTHER" id="PTHR13312:SF6">
    <property type="entry name" value="UBIQUITIN THIOESTERASE OTU"/>
    <property type="match status" value="1"/>
</dbReference>
<dbReference type="Pfam" id="PF02338">
    <property type="entry name" value="OTU"/>
    <property type="match status" value="1"/>
</dbReference>
<dbReference type="SUPFAM" id="SSF54001">
    <property type="entry name" value="Cysteine proteinases"/>
    <property type="match status" value="1"/>
</dbReference>
<dbReference type="PROSITE" id="PS50802">
    <property type="entry name" value="OTU"/>
    <property type="match status" value="1"/>
</dbReference>
<evidence type="ECO:0000250" key="1">
    <source>
        <dbReference type="UniProtKB" id="Q96G74"/>
    </source>
</evidence>
<evidence type="ECO:0000255" key="2"/>
<evidence type="ECO:0000255" key="3">
    <source>
        <dbReference type="PROSITE-ProRule" id="PRU00139"/>
    </source>
</evidence>
<evidence type="ECO:0000269" key="4">
    <source>
    </source>
</evidence>
<evidence type="ECO:0000269" key="5">
    <source>
    </source>
</evidence>
<evidence type="ECO:0000303" key="6">
    <source>
    </source>
</evidence>
<evidence type="ECO:0000303" key="7">
    <source ref="6"/>
</evidence>
<evidence type="ECO:0000305" key="8"/>
<evidence type="ECO:0000312" key="9">
    <source>
        <dbReference type="Araport" id="AT3G57810"/>
    </source>
</evidence>
<evidence type="ECO:0000312" key="10">
    <source>
        <dbReference type="EMBL" id="CAB67609.1"/>
    </source>
</evidence>
<accession>Q8LBZ4</accession>
<accession>A0A178VJL7</accession>
<accession>A0A2H1ZEL0</accession>
<accession>K9M8R2</accession>
<accession>K9M8T1</accession>
<accession>K9M8Y0</accession>
<accession>K9M9G5</accession>
<accession>Q67XW3</accession>
<accession>Q682S6</accession>
<accession>Q9M2R6</accession>
<protein>
    <recommendedName>
        <fullName evidence="6">OVARIAN TUMOR DOMAIN-containing deubiquitinating enzyme 4</fullName>
        <shortName evidence="6">OTU domain-containing protein 4</shortName>
        <ecNumber evidence="5">3.4.19.12</ecNumber>
    </recommendedName>
    <alternativeName>
        <fullName evidence="6">Deubiquitinating enzyme OTU4</fullName>
    </alternativeName>
</protein>
<reference key="1">
    <citation type="journal article" date="2014" name="Front. Plant Sci.">
        <title>Distinct phylogenetic relationships and biochemical properties of Arabidopsis ovarian tumor-related deubiquitinases support their functional differentiation.</title>
        <authorList>
            <person name="Radjacommare R."/>
            <person name="Usharani R."/>
            <person name="Kuo C.-H."/>
            <person name="Fu H."/>
        </authorList>
    </citation>
    <scope>NUCLEOTIDE SEQUENCE [MRNA] (ISOFORMS 1; 2; 4 AND 5)</scope>
    <scope>FUNCTION</scope>
    <scope>MUTAGENESIS OF CYS-179</scope>
    <scope>BIOPHYSICOCHEMICAL PROPERTIES</scope>
    <scope>CATALYTIC ACTIVITY</scope>
    <scope>GENE FAMILY</scope>
    <scope>NOMENCLATURE</scope>
</reference>
<reference key="2">
    <citation type="journal article" date="2000" name="Nature">
        <title>Sequence and analysis of chromosome 3 of the plant Arabidopsis thaliana.</title>
        <authorList>
            <person name="Salanoubat M."/>
            <person name="Lemcke K."/>
            <person name="Rieger M."/>
            <person name="Ansorge W."/>
            <person name="Unseld M."/>
            <person name="Fartmann B."/>
            <person name="Valle G."/>
            <person name="Bloecker H."/>
            <person name="Perez-Alonso M."/>
            <person name="Obermaier B."/>
            <person name="Delseny M."/>
            <person name="Boutry M."/>
            <person name="Grivell L.A."/>
            <person name="Mache R."/>
            <person name="Puigdomenech P."/>
            <person name="De Simone V."/>
            <person name="Choisne N."/>
            <person name="Artiguenave F."/>
            <person name="Robert C."/>
            <person name="Brottier P."/>
            <person name="Wincker P."/>
            <person name="Cattolico L."/>
            <person name="Weissenbach J."/>
            <person name="Saurin W."/>
            <person name="Quetier F."/>
            <person name="Schaefer M."/>
            <person name="Mueller-Auer S."/>
            <person name="Gabel C."/>
            <person name="Fuchs M."/>
            <person name="Benes V."/>
            <person name="Wurmbach E."/>
            <person name="Drzonek H."/>
            <person name="Erfle H."/>
            <person name="Jordan N."/>
            <person name="Bangert S."/>
            <person name="Wiedelmann R."/>
            <person name="Kranz H."/>
            <person name="Voss H."/>
            <person name="Holland R."/>
            <person name="Brandt P."/>
            <person name="Nyakatura G."/>
            <person name="Vezzi A."/>
            <person name="D'Angelo M."/>
            <person name="Pallavicini A."/>
            <person name="Toppo S."/>
            <person name="Simionati B."/>
            <person name="Conrad A."/>
            <person name="Hornischer K."/>
            <person name="Kauer G."/>
            <person name="Loehnert T.-H."/>
            <person name="Nordsiek G."/>
            <person name="Reichelt J."/>
            <person name="Scharfe M."/>
            <person name="Schoen O."/>
            <person name="Bargues M."/>
            <person name="Terol J."/>
            <person name="Climent J."/>
            <person name="Navarro P."/>
            <person name="Collado C."/>
            <person name="Perez-Perez A."/>
            <person name="Ottenwaelder B."/>
            <person name="Duchemin D."/>
            <person name="Cooke R."/>
            <person name="Laudie M."/>
            <person name="Berger-Llauro C."/>
            <person name="Purnelle B."/>
            <person name="Masuy D."/>
            <person name="de Haan M."/>
            <person name="Maarse A.C."/>
            <person name="Alcaraz J.-P."/>
            <person name="Cottet A."/>
            <person name="Casacuberta E."/>
            <person name="Monfort A."/>
            <person name="Argiriou A."/>
            <person name="Flores M."/>
            <person name="Liguori R."/>
            <person name="Vitale D."/>
            <person name="Mannhaupt G."/>
            <person name="Haase D."/>
            <person name="Schoof H."/>
            <person name="Rudd S."/>
            <person name="Zaccaria P."/>
            <person name="Mewes H.-W."/>
            <person name="Mayer K.F.X."/>
            <person name="Kaul S."/>
            <person name="Town C.D."/>
            <person name="Koo H.L."/>
            <person name="Tallon L.J."/>
            <person name="Jenkins J."/>
            <person name="Rooney T."/>
            <person name="Rizzo M."/>
            <person name="Walts A."/>
            <person name="Utterback T."/>
            <person name="Fujii C.Y."/>
            <person name="Shea T.P."/>
            <person name="Creasy T.H."/>
            <person name="Haas B."/>
            <person name="Maiti R."/>
            <person name="Wu D."/>
            <person name="Peterson J."/>
            <person name="Van Aken S."/>
            <person name="Pai G."/>
            <person name="Militscher J."/>
            <person name="Sellers P."/>
            <person name="Gill J.E."/>
            <person name="Feldblyum T.V."/>
            <person name="Preuss D."/>
            <person name="Lin X."/>
            <person name="Nierman W.C."/>
            <person name="Salzberg S.L."/>
            <person name="White O."/>
            <person name="Venter J.C."/>
            <person name="Fraser C.M."/>
            <person name="Kaneko T."/>
            <person name="Nakamura Y."/>
            <person name="Sato S."/>
            <person name="Kato T."/>
            <person name="Asamizu E."/>
            <person name="Sasamoto S."/>
            <person name="Kimura T."/>
            <person name="Idesawa K."/>
            <person name="Kawashima K."/>
            <person name="Kishida Y."/>
            <person name="Kiyokawa C."/>
            <person name="Kohara M."/>
            <person name="Matsumoto M."/>
            <person name="Matsuno A."/>
            <person name="Muraki A."/>
            <person name="Nakayama S."/>
            <person name="Nakazaki N."/>
            <person name="Shinpo S."/>
            <person name="Takeuchi C."/>
            <person name="Wada T."/>
            <person name="Watanabe A."/>
            <person name="Yamada M."/>
            <person name="Yasuda M."/>
            <person name="Tabata S."/>
        </authorList>
    </citation>
    <scope>NUCLEOTIDE SEQUENCE [LARGE SCALE GENOMIC DNA]</scope>
    <source>
        <strain>cv. Columbia</strain>
    </source>
</reference>
<reference key="3">
    <citation type="journal article" date="2017" name="Plant J.">
        <title>Araport11: a complete reannotation of the Arabidopsis thaliana reference genome.</title>
        <authorList>
            <person name="Cheng C.Y."/>
            <person name="Krishnakumar V."/>
            <person name="Chan A.P."/>
            <person name="Thibaud-Nissen F."/>
            <person name="Schobel S."/>
            <person name="Town C.D."/>
        </authorList>
    </citation>
    <scope>GENOME REANNOTATION</scope>
    <source>
        <strain>cv. Columbia</strain>
    </source>
</reference>
<reference key="4">
    <citation type="submission" date="2002-03" db="EMBL/GenBank/DDBJ databases">
        <title>Full-length cDNA from Arabidopsis thaliana.</title>
        <authorList>
            <person name="Brover V.V."/>
            <person name="Troukhan M.E."/>
            <person name="Alexandrov N.A."/>
            <person name="Lu Y.-P."/>
            <person name="Flavell R.B."/>
            <person name="Feldmann K.A."/>
        </authorList>
    </citation>
    <scope>NUCLEOTIDE SEQUENCE [LARGE SCALE MRNA] (ISOFORM 1)</scope>
</reference>
<reference key="5">
    <citation type="journal article" date="2004" name="Genome Res.">
        <title>Whole genome sequence comparisons and 'full-length' cDNA sequences: a combined approach to evaluate and improve Arabidopsis genome annotation.</title>
        <authorList>
            <person name="Castelli V."/>
            <person name="Aury J.-M."/>
            <person name="Jaillon O."/>
            <person name="Wincker P."/>
            <person name="Clepet C."/>
            <person name="Menard M."/>
            <person name="Cruaud C."/>
            <person name="Quetier F."/>
            <person name="Scarpelli C."/>
            <person name="Schaechter V."/>
            <person name="Temple G."/>
            <person name="Caboche M."/>
            <person name="Weissenbach J."/>
            <person name="Salanoubat M."/>
        </authorList>
    </citation>
    <scope>NUCLEOTIDE SEQUENCE [LARGE SCALE MRNA] (ISOFORM 3)</scope>
    <source>
        <strain>cv. Columbia</strain>
    </source>
</reference>
<reference key="6">
    <citation type="submission" date="2004-09" db="EMBL/GenBank/DDBJ databases">
        <title>Large-scale analysis of RIKEN Arabidopsis full-length (RAFL) cDNAs.</title>
        <authorList>
            <person name="Totoki Y."/>
            <person name="Seki M."/>
            <person name="Ishida J."/>
            <person name="Nakajima M."/>
            <person name="Enju A."/>
            <person name="Kamiya A."/>
            <person name="Narusaka M."/>
            <person name="Shin-i T."/>
            <person name="Nakagawa M."/>
            <person name="Sakamoto N."/>
            <person name="Oishi K."/>
            <person name="Kohara Y."/>
            <person name="Kobayashi M."/>
            <person name="Toyoda A."/>
            <person name="Sakaki Y."/>
            <person name="Sakurai T."/>
            <person name="Iida K."/>
            <person name="Akiyama K."/>
            <person name="Satou M."/>
            <person name="Toyoda T."/>
            <person name="Konagaya A."/>
            <person name="Carninci P."/>
            <person name="Kawai J."/>
            <person name="Hayashizaki Y."/>
            <person name="Shinozaki K."/>
        </authorList>
    </citation>
    <scope>NUCLEOTIDE SEQUENCE [LARGE SCALE MRNA] (ISOFORMS 1 AND 2)</scope>
    <source>
        <strain>cv. Columbia</strain>
    </source>
</reference>
<reference key="7">
    <citation type="submission" date="2006-07" db="EMBL/GenBank/DDBJ databases">
        <title>Arabidopsis ORF clones.</title>
        <authorList>
            <person name="Kim C.J."/>
            <person name="Chen H."/>
            <person name="Quinitio C."/>
            <person name="Shinn P."/>
            <person name="Ecker J.R."/>
        </authorList>
    </citation>
    <scope>NUCLEOTIDE SEQUENCE [LARGE SCALE MRNA] (ISOFORM 1)</scope>
</reference>
<reference key="8">
    <citation type="journal article" date="2004" name="Plant Physiol.">
        <title>AraPerox. A database of putative Arabidopsis proteins from plant peroxisomes.</title>
        <authorList>
            <person name="Reumann S."/>
            <person name="Ma C."/>
            <person name="Lemke S."/>
            <person name="Babujee L."/>
        </authorList>
    </citation>
    <scope>PREDICTION</scope>
</reference>
<proteinExistence type="evidence at protein level"/>